<dbReference type="EMBL" id="AL162971">
    <property type="protein sequence ID" value="CAB85979.1"/>
    <property type="molecule type" value="Genomic_DNA"/>
</dbReference>
<dbReference type="EMBL" id="CP002688">
    <property type="protein sequence ID" value="AED90470.1"/>
    <property type="molecule type" value="Genomic_DNA"/>
</dbReference>
<dbReference type="EMBL" id="AY086229">
    <property type="protein sequence ID" value="AAM64305.1"/>
    <property type="molecule type" value="mRNA"/>
</dbReference>
<dbReference type="PIR" id="T48263">
    <property type="entry name" value="T48263"/>
</dbReference>
<dbReference type="RefSeq" id="NP_195862.1">
    <property type="nucleotide sequence ID" value="NM_120320.3"/>
</dbReference>
<dbReference type="SMR" id="Q9LZ60"/>
<dbReference type="BioGRID" id="17112">
    <property type="interactions" value="4"/>
</dbReference>
<dbReference type="FunCoup" id="Q9LZ60">
    <property type="interactions" value="15"/>
</dbReference>
<dbReference type="IntAct" id="Q9LZ60">
    <property type="interactions" value="4"/>
</dbReference>
<dbReference type="STRING" id="3702.Q9LZ60"/>
<dbReference type="PaxDb" id="3702-AT5G02420.1"/>
<dbReference type="ProteomicsDB" id="234573"/>
<dbReference type="EnsemblPlants" id="AT5G02420.1">
    <property type="protein sequence ID" value="AT5G02420.1"/>
    <property type="gene ID" value="AT5G02420"/>
</dbReference>
<dbReference type="GeneID" id="831836"/>
<dbReference type="Gramene" id="AT5G02420.1">
    <property type="protein sequence ID" value="AT5G02420.1"/>
    <property type="gene ID" value="AT5G02420"/>
</dbReference>
<dbReference type="KEGG" id="ath:AT5G02420"/>
<dbReference type="Araport" id="AT5G02420"/>
<dbReference type="TAIR" id="AT5G02420">
    <property type="gene designation" value="SMR3"/>
</dbReference>
<dbReference type="eggNOG" id="ENOG502S6WR">
    <property type="taxonomic scope" value="Eukaryota"/>
</dbReference>
<dbReference type="HOGENOM" id="CLU_2174555_0_0_1"/>
<dbReference type="InParanoid" id="Q9LZ60"/>
<dbReference type="OMA" id="ATILKCP"/>
<dbReference type="PhylomeDB" id="Q9LZ60"/>
<dbReference type="PRO" id="PR:Q9LZ60"/>
<dbReference type="Proteomes" id="UP000006548">
    <property type="component" value="Chromosome 5"/>
</dbReference>
<dbReference type="ExpressionAtlas" id="Q9LZ60">
    <property type="expression patterns" value="baseline and differential"/>
</dbReference>
<dbReference type="GO" id="GO:0005634">
    <property type="term" value="C:nucleus"/>
    <property type="evidence" value="ECO:0000314"/>
    <property type="project" value="UniProtKB"/>
</dbReference>
<dbReference type="GO" id="GO:0004860">
    <property type="term" value="F:protein kinase inhibitor activity"/>
    <property type="evidence" value="ECO:0007669"/>
    <property type="project" value="UniProtKB-KW"/>
</dbReference>
<dbReference type="GO" id="GO:0032875">
    <property type="term" value="P:regulation of DNA endoreduplication"/>
    <property type="evidence" value="ECO:0007669"/>
    <property type="project" value="InterPro"/>
</dbReference>
<dbReference type="InterPro" id="IPR040389">
    <property type="entry name" value="SMR"/>
</dbReference>
<dbReference type="PANTHER" id="PTHR33142">
    <property type="entry name" value="CYCLIN-DEPENDENT PROTEIN KINASE INHIBITOR SMR13"/>
    <property type="match status" value="1"/>
</dbReference>
<dbReference type="PANTHER" id="PTHR33142:SF66">
    <property type="entry name" value="CYCLIN-DEPENDENT PROTEIN KINASE INHIBITOR SMR3"/>
    <property type="match status" value="1"/>
</dbReference>
<protein>
    <recommendedName>
        <fullName evidence="5 6">Cyclin-dependent protein kinase inhibitor SMR3</fullName>
    </recommendedName>
    <alternativeName>
        <fullName evidence="5 6">Protein SIAMESE-RELATED 3</fullName>
    </alternativeName>
</protein>
<accession>Q9LZ60</accession>
<accession>Q8LD37</accession>
<sequence>MAEICCVKEIQEEDVEKIRLPTRPELDIPDSDHEDPTVNEEEGCKTPTSSDHKIPEVKYTLCPPAPRKPKPNRSSGTKRKLTPVNVVNRIPIDLSREIEMFFEDLDRRIKKSRKQ</sequence>
<feature type="chain" id="PRO_0000418066" description="Cyclin-dependent protein kinase inhibitor SMR3">
    <location>
        <begin position="1"/>
        <end position="115"/>
    </location>
</feature>
<feature type="region of interest" description="Disordered" evidence="1">
    <location>
        <begin position="17"/>
        <end position="82"/>
    </location>
</feature>
<feature type="compositionally biased region" description="Basic and acidic residues" evidence="1">
    <location>
        <begin position="17"/>
        <end position="36"/>
    </location>
</feature>
<feature type="compositionally biased region" description="Basic residues" evidence="1">
    <location>
        <begin position="67"/>
        <end position="81"/>
    </location>
</feature>
<feature type="sequence conflict" description="In Ref. 3; AAM64305." evidence="7" ref="3">
    <original>D</original>
    <variation>V</variation>
    <location>
        <position position="30"/>
    </location>
</feature>
<feature type="sequence conflict" description="In Ref. 3; AAM64305." evidence="7" ref="3">
    <original>V</original>
    <variation>L</variation>
    <location>
        <position position="87"/>
    </location>
</feature>
<reference key="1">
    <citation type="journal article" date="2000" name="Nature">
        <title>Sequence and analysis of chromosome 5 of the plant Arabidopsis thaliana.</title>
        <authorList>
            <person name="Tabata S."/>
            <person name="Kaneko T."/>
            <person name="Nakamura Y."/>
            <person name="Kotani H."/>
            <person name="Kato T."/>
            <person name="Asamizu E."/>
            <person name="Miyajima N."/>
            <person name="Sasamoto S."/>
            <person name="Kimura T."/>
            <person name="Hosouchi T."/>
            <person name="Kawashima K."/>
            <person name="Kohara M."/>
            <person name="Matsumoto M."/>
            <person name="Matsuno A."/>
            <person name="Muraki A."/>
            <person name="Nakayama S."/>
            <person name="Nakazaki N."/>
            <person name="Naruo K."/>
            <person name="Okumura S."/>
            <person name="Shinpo S."/>
            <person name="Takeuchi C."/>
            <person name="Wada T."/>
            <person name="Watanabe A."/>
            <person name="Yamada M."/>
            <person name="Yasuda M."/>
            <person name="Sato S."/>
            <person name="de la Bastide M."/>
            <person name="Huang E."/>
            <person name="Spiegel L."/>
            <person name="Gnoj L."/>
            <person name="O'Shaughnessy A."/>
            <person name="Preston R."/>
            <person name="Habermann K."/>
            <person name="Murray J."/>
            <person name="Johnson D."/>
            <person name="Rohlfing T."/>
            <person name="Nelson J."/>
            <person name="Stoneking T."/>
            <person name="Pepin K."/>
            <person name="Spieth J."/>
            <person name="Sekhon M."/>
            <person name="Armstrong J."/>
            <person name="Becker M."/>
            <person name="Belter E."/>
            <person name="Cordum H."/>
            <person name="Cordes M."/>
            <person name="Courtney L."/>
            <person name="Courtney W."/>
            <person name="Dante M."/>
            <person name="Du H."/>
            <person name="Edwards J."/>
            <person name="Fryman J."/>
            <person name="Haakensen B."/>
            <person name="Lamar E."/>
            <person name="Latreille P."/>
            <person name="Leonard S."/>
            <person name="Meyer R."/>
            <person name="Mulvaney E."/>
            <person name="Ozersky P."/>
            <person name="Riley A."/>
            <person name="Strowmatt C."/>
            <person name="Wagner-McPherson C."/>
            <person name="Wollam A."/>
            <person name="Yoakum M."/>
            <person name="Bell M."/>
            <person name="Dedhia N."/>
            <person name="Parnell L."/>
            <person name="Shah R."/>
            <person name="Rodriguez M."/>
            <person name="Hoon See L."/>
            <person name="Vil D."/>
            <person name="Baker J."/>
            <person name="Kirchoff K."/>
            <person name="Toth K."/>
            <person name="King L."/>
            <person name="Bahret A."/>
            <person name="Miller B."/>
            <person name="Marra M.A."/>
            <person name="Martienssen R."/>
            <person name="McCombie W.R."/>
            <person name="Wilson R.K."/>
            <person name="Murphy G."/>
            <person name="Bancroft I."/>
            <person name="Volckaert G."/>
            <person name="Wambutt R."/>
            <person name="Duesterhoeft A."/>
            <person name="Stiekema W."/>
            <person name="Pohl T."/>
            <person name="Entian K.-D."/>
            <person name="Terryn N."/>
            <person name="Hartley N."/>
            <person name="Bent E."/>
            <person name="Johnson S."/>
            <person name="Langham S.-A."/>
            <person name="McCullagh B."/>
            <person name="Robben J."/>
            <person name="Grymonprez B."/>
            <person name="Zimmermann W."/>
            <person name="Ramsperger U."/>
            <person name="Wedler H."/>
            <person name="Balke K."/>
            <person name="Wedler E."/>
            <person name="Peters S."/>
            <person name="van Staveren M."/>
            <person name="Dirkse W."/>
            <person name="Mooijman P."/>
            <person name="Klein Lankhorst R."/>
            <person name="Weitzenegger T."/>
            <person name="Bothe G."/>
            <person name="Rose M."/>
            <person name="Hauf J."/>
            <person name="Berneiser S."/>
            <person name="Hempel S."/>
            <person name="Feldpausch M."/>
            <person name="Lamberth S."/>
            <person name="Villarroel R."/>
            <person name="Gielen J."/>
            <person name="Ardiles W."/>
            <person name="Bents O."/>
            <person name="Lemcke K."/>
            <person name="Kolesov G."/>
            <person name="Mayer K.F.X."/>
            <person name="Rudd S."/>
            <person name="Schoof H."/>
            <person name="Schueller C."/>
            <person name="Zaccaria P."/>
            <person name="Mewes H.-W."/>
            <person name="Bevan M."/>
            <person name="Fransz P.F."/>
        </authorList>
    </citation>
    <scope>NUCLEOTIDE SEQUENCE [LARGE SCALE GENOMIC DNA]</scope>
    <source>
        <strain>cv. Columbia</strain>
    </source>
</reference>
<reference key="2">
    <citation type="journal article" date="2017" name="Plant J.">
        <title>Araport11: a complete reannotation of the Arabidopsis thaliana reference genome.</title>
        <authorList>
            <person name="Cheng C.Y."/>
            <person name="Krishnakumar V."/>
            <person name="Chan A.P."/>
            <person name="Thibaud-Nissen F."/>
            <person name="Schobel S."/>
            <person name="Town C.D."/>
        </authorList>
    </citation>
    <scope>GENOME REANNOTATION</scope>
    <source>
        <strain>cv. Columbia</strain>
    </source>
</reference>
<reference key="3">
    <citation type="submission" date="2002-03" db="EMBL/GenBank/DDBJ databases">
        <title>Full-length cDNA from Arabidopsis thaliana.</title>
        <authorList>
            <person name="Brover V.V."/>
            <person name="Troukhan M.E."/>
            <person name="Alexandrov N.A."/>
            <person name="Lu Y.-P."/>
            <person name="Flavell R.B."/>
            <person name="Feldmann K.A."/>
        </authorList>
    </citation>
    <scope>NUCLEOTIDE SEQUENCE [LARGE SCALE MRNA]</scope>
</reference>
<reference key="4">
    <citation type="journal article" date="2006" name="Plant Cell">
        <title>SIAMESE, a plant-specific cell cycle regulator, controls endoreplication onset in Arabidopsis thaliana.</title>
        <authorList>
            <person name="Churchman M.L."/>
            <person name="Brown M.L."/>
            <person name="Kato N."/>
            <person name="Kirik V."/>
            <person name="Huelskamp M."/>
            <person name="Inze D."/>
            <person name="De Veylder L."/>
            <person name="Walker J.D."/>
            <person name="Zheng Z."/>
            <person name="Oppenheimer D.G."/>
            <person name="Gwin T."/>
            <person name="Churchman J."/>
            <person name="Larkin J.C."/>
        </authorList>
    </citation>
    <scope>SUBCELLULAR LOCATION</scope>
    <scope>TISSUE SPECIFICITY</scope>
</reference>
<reference key="5">
    <citation type="journal article" date="2010" name="Mol. Syst. Biol.">
        <title>Targeted interactomics reveals a complex core cell cycle machinery in Arabidopsis thaliana.</title>
        <authorList>
            <person name="Van Leene J."/>
            <person name="Hollunder J."/>
            <person name="Eeckhout D."/>
            <person name="Persiau G."/>
            <person name="Van De Slijke E."/>
            <person name="Stals H."/>
            <person name="Van Isterdael G."/>
            <person name="Verkest A."/>
            <person name="Neirynck S."/>
            <person name="Buffel Y."/>
            <person name="De Bodt S."/>
            <person name="Maere S."/>
            <person name="Laukens K."/>
            <person name="Pharazyn A."/>
            <person name="Ferreira P.C.G."/>
            <person name="Eloy N."/>
            <person name="Renne C."/>
            <person name="Meyer C."/>
            <person name="Faure J.-D."/>
            <person name="Steinbrenner J."/>
            <person name="Beynon J."/>
            <person name="Larkin J.C."/>
            <person name="Van de Peer Y."/>
            <person name="Hilson P."/>
            <person name="Kuiper M."/>
            <person name="De Veylder L."/>
            <person name="Van Onckelen H."/>
            <person name="Inze D."/>
            <person name="Witters E."/>
            <person name="De Jaeger G."/>
        </authorList>
    </citation>
    <scope>INTERACTION WITH CDKA-1 AND D-TYPE CYCLINS</scope>
</reference>
<reference key="6">
    <citation type="journal article" date="2014" name="Plant Cell">
        <title>The Arabidopsis SIAMESE-RELATED cyclin-dependent kinase inhibitors SMR5 and SMR7 regulate the DNA damage checkpoint in response to reactive oxygen species.</title>
        <authorList>
            <person name="Yi D."/>
            <person name="Alvim Kamei C.L."/>
            <person name="Cools T."/>
            <person name="Vanderauwera S."/>
            <person name="Takahashi N."/>
            <person name="Okushima Y."/>
            <person name="Eekhout T."/>
            <person name="Yoshiyama K.O."/>
            <person name="Larkin J."/>
            <person name="Van den Daele H."/>
            <person name="Conklin P."/>
            <person name="Britt A."/>
            <person name="Umeda M."/>
            <person name="De Veylder L."/>
        </authorList>
    </citation>
    <scope>GENE FAMILY</scope>
    <scope>NOMENCLATURE</scope>
</reference>
<reference key="7">
    <citation type="journal article" date="2015" name="Plant Cell">
        <title>Functional conservation in the SIAMESE-RELATED family of cyclin-dependent kinase inhibitors in land plants.</title>
        <authorList>
            <person name="Kumar N."/>
            <person name="Harashima H."/>
            <person name="Kalve S."/>
            <person name="Bramsiepe J."/>
            <person name="Wang K."/>
            <person name="Sizani B.L."/>
            <person name="Bertrand L.L."/>
            <person name="Johnson M.C."/>
            <person name="Faulk C."/>
            <person name="Dale R."/>
            <person name="Simmons L.A."/>
            <person name="Churchman M.L."/>
            <person name="Sugimoto K."/>
            <person name="Kato N."/>
            <person name="Dasanayake M."/>
            <person name="Beemster G."/>
            <person name="Schnittger A."/>
            <person name="Larkin J.C."/>
        </authorList>
    </citation>
    <scope>FUNCTION</scope>
    <scope>GENE FAMILY</scope>
    <scope>NOMENCLATURE</scope>
</reference>
<organism>
    <name type="scientific">Arabidopsis thaliana</name>
    <name type="common">Mouse-ear cress</name>
    <dbReference type="NCBI Taxonomy" id="3702"/>
    <lineage>
        <taxon>Eukaryota</taxon>
        <taxon>Viridiplantae</taxon>
        <taxon>Streptophyta</taxon>
        <taxon>Embryophyta</taxon>
        <taxon>Tracheophyta</taxon>
        <taxon>Spermatophyta</taxon>
        <taxon>Magnoliopsida</taxon>
        <taxon>eudicotyledons</taxon>
        <taxon>Gunneridae</taxon>
        <taxon>Pentapetalae</taxon>
        <taxon>rosids</taxon>
        <taxon>malvids</taxon>
        <taxon>Brassicales</taxon>
        <taxon>Brassicaceae</taxon>
        <taxon>Camelineae</taxon>
        <taxon>Arabidopsis</taxon>
    </lineage>
</organism>
<proteinExistence type="evidence at protein level"/>
<comment type="function">
    <text evidence="4">Probable cyclin-dependent protein kinase (CDK) inhibitor that functions as a repressor of mitosis in the endoreduplication cell cycle.</text>
</comment>
<comment type="subunit">
    <text evidence="3">Interacts with CDKA-1 and D-type cyclins (PubMed:20706207).</text>
</comment>
<comment type="subcellular location">
    <subcellularLocation>
        <location evidence="2">Nucleus</location>
    </subcellularLocation>
</comment>
<comment type="tissue specificity">
    <text evidence="2">Expressed at low levels in roots and stems.</text>
</comment>
<keyword id="KW-0131">Cell cycle</keyword>
<keyword id="KW-0539">Nucleus</keyword>
<keyword id="KW-0649">Protein kinase inhibitor</keyword>
<keyword id="KW-1185">Reference proteome</keyword>
<evidence type="ECO:0000256" key="1">
    <source>
        <dbReference type="SAM" id="MobiDB-lite"/>
    </source>
</evidence>
<evidence type="ECO:0000269" key="2">
    <source>
    </source>
</evidence>
<evidence type="ECO:0000269" key="3">
    <source>
    </source>
</evidence>
<evidence type="ECO:0000269" key="4">
    <source>
    </source>
</evidence>
<evidence type="ECO:0000303" key="5">
    <source>
    </source>
</evidence>
<evidence type="ECO:0000303" key="6">
    <source>
    </source>
</evidence>
<evidence type="ECO:0000305" key="7"/>
<gene>
    <name evidence="5 6" type="primary">SMR3</name>
    <name type="ordered locus">At5g02420</name>
    <name type="ORF">T22P11.10</name>
</gene>
<name>SMR3_ARATH</name>